<sequence length="293" mass="34982">MELLQQYLQQQQEELKIQRELHSSGQSQNAYQQQQQLEDDEEYDDDQLPLSPTQTEEFDYDNDYNDEEFYDEDDDFKEDDDEEEEEEDDEMYPIRQDNNIDDDDYEEDEEEQLLYPTNNNNNTTTTTPYTTYNNNNNNDINNNNNNNTKSEMTMIPTVSSNISLNPLQILEQYLNTQQQIQQKQFQKHQEELQIQQLQQNHPLQLLEQYLQQQQQIQQEQFFNHQRENQVPNSNSNSLNSSNENNNNNVNNNNNIINNNNNSINNNMNNSNNNNNNNNNGNKNPFFLDDFIYI</sequence>
<name>Y8707_DICDI</name>
<proteinExistence type="predicted"/>
<dbReference type="EMBL" id="AAFI02000008">
    <property type="protein sequence ID" value="EAL71249.1"/>
    <property type="molecule type" value="Genomic_DNA"/>
</dbReference>
<dbReference type="RefSeq" id="XP_645188.1">
    <property type="nucleotide sequence ID" value="XM_640096.1"/>
</dbReference>
<dbReference type="PaxDb" id="44689-DDB0168707"/>
<dbReference type="EnsemblProtists" id="EAL71249">
    <property type="protein sequence ID" value="EAL71249"/>
    <property type="gene ID" value="DDB_G0272194"/>
</dbReference>
<dbReference type="GeneID" id="8618360"/>
<dbReference type="KEGG" id="ddi:DDB_G0272194"/>
<dbReference type="dictyBase" id="DDB_G0272194"/>
<dbReference type="HOGENOM" id="CLU_951318_0_0_1"/>
<dbReference type="InParanoid" id="Q86IM3"/>
<dbReference type="PRO" id="PR:Q86IM3"/>
<dbReference type="Proteomes" id="UP000002195">
    <property type="component" value="Chromosome 2"/>
</dbReference>
<dbReference type="GO" id="GO:0004402">
    <property type="term" value="F:histone acetyltransferase activity"/>
    <property type="evidence" value="ECO:0000318"/>
    <property type="project" value="GO_Central"/>
</dbReference>
<keyword id="KW-1185">Reference proteome</keyword>
<gene>
    <name type="ORF">DDB_G0272194</name>
</gene>
<reference key="1">
    <citation type="journal article" date="2002" name="Nature">
        <title>Sequence and analysis of chromosome 2 of Dictyostelium discoideum.</title>
        <authorList>
            <person name="Gloeckner G."/>
            <person name="Eichinger L."/>
            <person name="Szafranski K."/>
            <person name="Pachebat J.A."/>
            <person name="Bankier A.T."/>
            <person name="Dear P.H."/>
            <person name="Lehmann R."/>
            <person name="Baumgart C."/>
            <person name="Parra G."/>
            <person name="Abril J.F."/>
            <person name="Guigo R."/>
            <person name="Kumpf K."/>
            <person name="Tunggal B."/>
            <person name="Cox E.C."/>
            <person name="Quail M.A."/>
            <person name="Platzer M."/>
            <person name="Rosenthal A."/>
            <person name="Noegel A.A."/>
        </authorList>
    </citation>
    <scope>NUCLEOTIDE SEQUENCE [LARGE SCALE GENOMIC DNA]</scope>
    <source>
        <strain>AX4</strain>
    </source>
</reference>
<reference key="2">
    <citation type="journal article" date="2005" name="Nature">
        <title>The genome of the social amoeba Dictyostelium discoideum.</title>
        <authorList>
            <person name="Eichinger L."/>
            <person name="Pachebat J.A."/>
            <person name="Gloeckner G."/>
            <person name="Rajandream M.A."/>
            <person name="Sucgang R."/>
            <person name="Berriman M."/>
            <person name="Song J."/>
            <person name="Olsen R."/>
            <person name="Szafranski K."/>
            <person name="Xu Q."/>
            <person name="Tunggal B."/>
            <person name="Kummerfeld S."/>
            <person name="Madera M."/>
            <person name="Konfortov B.A."/>
            <person name="Rivero F."/>
            <person name="Bankier A.T."/>
            <person name="Lehmann R."/>
            <person name="Hamlin N."/>
            <person name="Davies R."/>
            <person name="Gaudet P."/>
            <person name="Fey P."/>
            <person name="Pilcher K."/>
            <person name="Chen G."/>
            <person name="Saunders D."/>
            <person name="Sodergren E.J."/>
            <person name="Davis P."/>
            <person name="Kerhornou A."/>
            <person name="Nie X."/>
            <person name="Hall N."/>
            <person name="Anjard C."/>
            <person name="Hemphill L."/>
            <person name="Bason N."/>
            <person name="Farbrother P."/>
            <person name="Desany B."/>
            <person name="Just E."/>
            <person name="Morio T."/>
            <person name="Rost R."/>
            <person name="Churcher C.M."/>
            <person name="Cooper J."/>
            <person name="Haydock S."/>
            <person name="van Driessche N."/>
            <person name="Cronin A."/>
            <person name="Goodhead I."/>
            <person name="Muzny D.M."/>
            <person name="Mourier T."/>
            <person name="Pain A."/>
            <person name="Lu M."/>
            <person name="Harper D."/>
            <person name="Lindsay R."/>
            <person name="Hauser H."/>
            <person name="James K.D."/>
            <person name="Quiles M."/>
            <person name="Madan Babu M."/>
            <person name="Saito T."/>
            <person name="Buchrieser C."/>
            <person name="Wardroper A."/>
            <person name="Felder M."/>
            <person name="Thangavelu M."/>
            <person name="Johnson D."/>
            <person name="Knights A."/>
            <person name="Loulseged H."/>
            <person name="Mungall K.L."/>
            <person name="Oliver K."/>
            <person name="Price C."/>
            <person name="Quail M.A."/>
            <person name="Urushihara H."/>
            <person name="Hernandez J."/>
            <person name="Rabbinowitsch E."/>
            <person name="Steffen D."/>
            <person name="Sanders M."/>
            <person name="Ma J."/>
            <person name="Kohara Y."/>
            <person name="Sharp S."/>
            <person name="Simmonds M.N."/>
            <person name="Spiegler S."/>
            <person name="Tivey A."/>
            <person name="Sugano S."/>
            <person name="White B."/>
            <person name="Walker D."/>
            <person name="Woodward J.R."/>
            <person name="Winckler T."/>
            <person name="Tanaka Y."/>
            <person name="Shaulsky G."/>
            <person name="Schleicher M."/>
            <person name="Weinstock G.M."/>
            <person name="Rosenthal A."/>
            <person name="Cox E.C."/>
            <person name="Chisholm R.L."/>
            <person name="Gibbs R.A."/>
            <person name="Loomis W.F."/>
            <person name="Platzer M."/>
            <person name="Kay R.R."/>
            <person name="Williams J.G."/>
            <person name="Dear P.H."/>
            <person name="Noegel A.A."/>
            <person name="Barrell B.G."/>
            <person name="Kuspa A."/>
        </authorList>
    </citation>
    <scope>NUCLEOTIDE SEQUENCE [LARGE SCALE GENOMIC DNA]</scope>
    <source>
        <strain>AX4</strain>
    </source>
</reference>
<protein>
    <recommendedName>
        <fullName>Putative uncharacterized protein DDB_G0272194</fullName>
    </recommendedName>
</protein>
<organism>
    <name type="scientific">Dictyostelium discoideum</name>
    <name type="common">Social amoeba</name>
    <dbReference type="NCBI Taxonomy" id="44689"/>
    <lineage>
        <taxon>Eukaryota</taxon>
        <taxon>Amoebozoa</taxon>
        <taxon>Evosea</taxon>
        <taxon>Eumycetozoa</taxon>
        <taxon>Dictyostelia</taxon>
        <taxon>Dictyosteliales</taxon>
        <taxon>Dictyosteliaceae</taxon>
        <taxon>Dictyostelium</taxon>
    </lineage>
</organism>
<evidence type="ECO:0000256" key="1">
    <source>
        <dbReference type="SAM" id="MobiDB-lite"/>
    </source>
</evidence>
<accession>Q86IM3</accession>
<accession>Q559Z6</accession>
<feature type="chain" id="PRO_0000348168" description="Putative uncharacterized protein DDB_G0272194">
    <location>
        <begin position="1"/>
        <end position="293"/>
    </location>
</feature>
<feature type="region of interest" description="Disordered" evidence="1">
    <location>
        <begin position="20"/>
        <end position="148"/>
    </location>
</feature>
<feature type="region of interest" description="Disordered" evidence="1">
    <location>
        <begin position="226"/>
        <end position="283"/>
    </location>
</feature>
<feature type="compositionally biased region" description="Acidic residues" evidence="1">
    <location>
        <begin position="37"/>
        <end position="47"/>
    </location>
</feature>
<feature type="compositionally biased region" description="Acidic residues" evidence="1">
    <location>
        <begin position="56"/>
        <end position="91"/>
    </location>
</feature>
<feature type="compositionally biased region" description="Acidic residues" evidence="1">
    <location>
        <begin position="99"/>
        <end position="112"/>
    </location>
</feature>
<feature type="compositionally biased region" description="Low complexity" evidence="1">
    <location>
        <begin position="117"/>
        <end position="148"/>
    </location>
</feature>
<feature type="compositionally biased region" description="Low complexity" evidence="1">
    <location>
        <begin position="232"/>
        <end position="283"/>
    </location>
</feature>